<protein>
    <recommendedName>
        <fullName evidence="1">ATP-dependent lipid A-core flippase</fullName>
        <ecNumber evidence="1">7.5.2.6</ecNumber>
    </recommendedName>
    <alternativeName>
        <fullName evidence="1">Lipid A export ATP-binding/permease protein MsbA</fullName>
    </alternativeName>
</protein>
<proteinExistence type="inferred from homology"/>
<sequence length="585" mass="63918">MSHDMTSRELYLRLLTYVRPYWKAFLAALACMGVASLAEPVFPAIMKSLLDDGFSKANGPWDWLFYPLAIMGIFLVRAIFGFLGDYLMSWVSNNVVAELRQAMFARMVRLPTRYYSDNLSGRLMSRIAYDVTGVAGAATNALTSLIKDSLSIVGLLVWLLWLNWQLTLITLSVVPFIAIVVRVFSKRLRSVARGQQESMGKITQVLQEAIEGHKVVKIFGGQSYEEDRFYESIREQRRLAMRATLASAAQSPLVQFFAASGVAIIMGVALKQASSDQTTVGSFVSFVTAMLMLMAPLKRVTDVNAPIQRGLAAAESVFSLVDEETEPDSGKEELGRAQGLVEFDGVTFTYPGSERPALDSVSLTVRPGECVALVGPSGSGKTTAANLLPRFYALDAGEIRVDGHALPNIRLNSLRDNIALVSQDVVLFNDTIGANIAYGGKRDATLDEIRAAAKAAHALEFIDALPEGLNTMIGENGVKLSGGQRQRLAIARAILKDAPILILDEATSALDTESERHVQAALDELMRGRSTLVIAHRLSTIERADRIIALAHGHKQEEGSHAELLAHDGLYARLYRMQKAEEVAV</sequence>
<accession>Q47JR8</accession>
<dbReference type="EC" id="7.5.2.6" evidence="1"/>
<dbReference type="EMBL" id="CP000089">
    <property type="protein sequence ID" value="AAZ44913.1"/>
    <property type="molecule type" value="Genomic_DNA"/>
</dbReference>
<dbReference type="SMR" id="Q47JR8"/>
<dbReference type="STRING" id="159087.Daro_0154"/>
<dbReference type="KEGG" id="dar:Daro_0154"/>
<dbReference type="eggNOG" id="COG1132">
    <property type="taxonomic scope" value="Bacteria"/>
</dbReference>
<dbReference type="HOGENOM" id="CLU_000604_84_3_4"/>
<dbReference type="OrthoDB" id="8554730at2"/>
<dbReference type="GO" id="GO:0005886">
    <property type="term" value="C:plasma membrane"/>
    <property type="evidence" value="ECO:0007669"/>
    <property type="project" value="UniProtKB-SubCell"/>
</dbReference>
<dbReference type="GO" id="GO:0015421">
    <property type="term" value="F:ABC-type oligopeptide transporter activity"/>
    <property type="evidence" value="ECO:0007669"/>
    <property type="project" value="TreeGrafter"/>
</dbReference>
<dbReference type="GO" id="GO:0005524">
    <property type="term" value="F:ATP binding"/>
    <property type="evidence" value="ECO:0007669"/>
    <property type="project" value="UniProtKB-KW"/>
</dbReference>
<dbReference type="GO" id="GO:0016887">
    <property type="term" value="F:ATP hydrolysis activity"/>
    <property type="evidence" value="ECO:0007669"/>
    <property type="project" value="InterPro"/>
</dbReference>
<dbReference type="GO" id="GO:0034040">
    <property type="term" value="F:ATPase-coupled lipid transmembrane transporter activity"/>
    <property type="evidence" value="ECO:0007669"/>
    <property type="project" value="InterPro"/>
</dbReference>
<dbReference type="CDD" id="cd18552">
    <property type="entry name" value="ABC_6TM_MsbA_like"/>
    <property type="match status" value="1"/>
</dbReference>
<dbReference type="FunFam" id="3.40.50.300:FF:000140">
    <property type="entry name" value="Lipid A export ATP-binding/permease protein MsbA"/>
    <property type="match status" value="1"/>
</dbReference>
<dbReference type="Gene3D" id="1.20.1560.10">
    <property type="entry name" value="ABC transporter type 1, transmembrane domain"/>
    <property type="match status" value="1"/>
</dbReference>
<dbReference type="Gene3D" id="3.40.50.300">
    <property type="entry name" value="P-loop containing nucleotide triphosphate hydrolases"/>
    <property type="match status" value="1"/>
</dbReference>
<dbReference type="InterPro" id="IPR003593">
    <property type="entry name" value="AAA+_ATPase"/>
</dbReference>
<dbReference type="InterPro" id="IPR011527">
    <property type="entry name" value="ABC1_TM_dom"/>
</dbReference>
<dbReference type="InterPro" id="IPR036640">
    <property type="entry name" value="ABC1_TM_sf"/>
</dbReference>
<dbReference type="InterPro" id="IPR003439">
    <property type="entry name" value="ABC_transporter-like_ATP-bd"/>
</dbReference>
<dbReference type="InterPro" id="IPR017871">
    <property type="entry name" value="ABC_transporter-like_CS"/>
</dbReference>
<dbReference type="InterPro" id="IPR011917">
    <property type="entry name" value="ABC_transpr_lipidA"/>
</dbReference>
<dbReference type="InterPro" id="IPR027417">
    <property type="entry name" value="P-loop_NTPase"/>
</dbReference>
<dbReference type="InterPro" id="IPR039421">
    <property type="entry name" value="Type_1_exporter"/>
</dbReference>
<dbReference type="NCBIfam" id="TIGR02203">
    <property type="entry name" value="MsbA_lipidA"/>
    <property type="match status" value="1"/>
</dbReference>
<dbReference type="PANTHER" id="PTHR43394:SF1">
    <property type="entry name" value="ATP-BINDING CASSETTE SUB-FAMILY B MEMBER 10, MITOCHONDRIAL"/>
    <property type="match status" value="1"/>
</dbReference>
<dbReference type="PANTHER" id="PTHR43394">
    <property type="entry name" value="ATP-DEPENDENT PERMEASE MDL1, MITOCHONDRIAL"/>
    <property type="match status" value="1"/>
</dbReference>
<dbReference type="Pfam" id="PF00664">
    <property type="entry name" value="ABC_membrane"/>
    <property type="match status" value="1"/>
</dbReference>
<dbReference type="Pfam" id="PF00005">
    <property type="entry name" value="ABC_tran"/>
    <property type="match status" value="1"/>
</dbReference>
<dbReference type="SMART" id="SM00382">
    <property type="entry name" value="AAA"/>
    <property type="match status" value="1"/>
</dbReference>
<dbReference type="SUPFAM" id="SSF90123">
    <property type="entry name" value="ABC transporter transmembrane region"/>
    <property type="match status" value="1"/>
</dbReference>
<dbReference type="SUPFAM" id="SSF52540">
    <property type="entry name" value="P-loop containing nucleoside triphosphate hydrolases"/>
    <property type="match status" value="1"/>
</dbReference>
<dbReference type="PROSITE" id="PS50929">
    <property type="entry name" value="ABC_TM1F"/>
    <property type="match status" value="1"/>
</dbReference>
<dbReference type="PROSITE" id="PS00211">
    <property type="entry name" value="ABC_TRANSPORTER_1"/>
    <property type="match status" value="1"/>
</dbReference>
<dbReference type="PROSITE" id="PS50893">
    <property type="entry name" value="ABC_TRANSPORTER_2"/>
    <property type="match status" value="1"/>
</dbReference>
<dbReference type="PROSITE" id="PS51239">
    <property type="entry name" value="MSBA"/>
    <property type="match status" value="1"/>
</dbReference>
<organism>
    <name type="scientific">Dechloromonas aromatica (strain RCB)</name>
    <dbReference type="NCBI Taxonomy" id="159087"/>
    <lineage>
        <taxon>Bacteria</taxon>
        <taxon>Pseudomonadati</taxon>
        <taxon>Pseudomonadota</taxon>
        <taxon>Betaproteobacteria</taxon>
        <taxon>Rhodocyclales</taxon>
        <taxon>Azonexaceae</taxon>
        <taxon>Dechloromonas</taxon>
    </lineage>
</organism>
<gene>
    <name evidence="1" type="primary">msbA</name>
    <name type="ordered locus">Daro_0154</name>
</gene>
<evidence type="ECO:0000255" key="1">
    <source>
        <dbReference type="HAMAP-Rule" id="MF_01703"/>
    </source>
</evidence>
<keyword id="KW-0067">ATP-binding</keyword>
<keyword id="KW-0997">Cell inner membrane</keyword>
<keyword id="KW-1003">Cell membrane</keyword>
<keyword id="KW-0445">Lipid transport</keyword>
<keyword id="KW-0472">Membrane</keyword>
<keyword id="KW-0547">Nucleotide-binding</keyword>
<keyword id="KW-1278">Translocase</keyword>
<keyword id="KW-0812">Transmembrane</keyword>
<keyword id="KW-1133">Transmembrane helix</keyword>
<keyword id="KW-0813">Transport</keyword>
<comment type="function">
    <text evidence="1">Involved in lipopolysaccharide (LPS) biosynthesis. Translocates lipid A-core from the inner to the outer leaflet of the inner membrane. Transmembrane domains (TMD) form a pore in the inner membrane and the ATP-binding domain (NBD) is responsible for energy generation.</text>
</comment>
<comment type="catalytic activity">
    <reaction evidence="1">
        <text>ATP + H2O + lipid A-core oligosaccharideSide 1 = ADP + phosphate + lipid A-core oligosaccharideSide 2.</text>
        <dbReference type="EC" id="7.5.2.6"/>
    </reaction>
</comment>
<comment type="subunit">
    <text evidence="1">Homodimer.</text>
</comment>
<comment type="subcellular location">
    <subcellularLocation>
        <location evidence="1">Cell inner membrane</location>
        <topology evidence="1">Multi-pass membrane protein</topology>
    </subcellularLocation>
</comment>
<comment type="domain">
    <text evidence="1">In MsbA the ATP-binding domain (NBD) and the transmembrane domain (TMD) are fused.</text>
</comment>
<comment type="similarity">
    <text evidence="1">Belongs to the ABC transporter superfamily. Lipid exporter (TC 3.A.1.106) family.</text>
</comment>
<name>MSBA_DECAR</name>
<reference key="1">
    <citation type="journal article" date="2009" name="BMC Genomics">
        <title>Metabolic analysis of the soil microbe Dechloromonas aromatica str. RCB: indications of a surprisingly complex life-style and cryptic anaerobic pathways for aromatic degradation.</title>
        <authorList>
            <person name="Salinero K.K."/>
            <person name="Keller K."/>
            <person name="Feil W.S."/>
            <person name="Feil H."/>
            <person name="Trong S."/>
            <person name="Di Bartolo G."/>
            <person name="Lapidus A."/>
        </authorList>
    </citation>
    <scope>NUCLEOTIDE SEQUENCE [LARGE SCALE GENOMIC DNA]</scope>
    <source>
        <strain>RCB</strain>
    </source>
</reference>
<feature type="chain" id="PRO_5000099662" description="ATP-dependent lipid A-core flippase">
    <location>
        <begin position="1"/>
        <end position="585"/>
    </location>
</feature>
<feature type="transmembrane region" description="Helical" evidence="1">
    <location>
        <begin position="25"/>
        <end position="45"/>
    </location>
</feature>
<feature type="transmembrane region" description="Helical" evidence="1">
    <location>
        <begin position="63"/>
        <end position="83"/>
    </location>
</feature>
<feature type="transmembrane region" description="Helical" evidence="1">
    <location>
        <begin position="127"/>
        <end position="146"/>
    </location>
</feature>
<feature type="transmembrane region" description="Helical" evidence="1">
    <location>
        <begin position="150"/>
        <end position="170"/>
    </location>
</feature>
<feature type="transmembrane region" description="Helical" evidence="1">
    <location>
        <begin position="250"/>
        <end position="270"/>
    </location>
</feature>
<feature type="transmembrane region" description="Helical" evidence="1">
    <location>
        <begin position="277"/>
        <end position="297"/>
    </location>
</feature>
<feature type="domain" description="ABC transmembrane type-1" evidence="1">
    <location>
        <begin position="26"/>
        <end position="309"/>
    </location>
</feature>
<feature type="domain" description="ABC transporter" evidence="1">
    <location>
        <begin position="341"/>
        <end position="577"/>
    </location>
</feature>
<feature type="binding site" evidence="1">
    <location>
        <begin position="375"/>
        <end position="382"/>
    </location>
    <ligand>
        <name>ATP</name>
        <dbReference type="ChEBI" id="CHEBI:30616"/>
    </ligand>
</feature>